<reference key="1">
    <citation type="journal article" date="2002" name="Plant Mol. Biol.">
        <title>Arabidopsis thaliana GATA factors: organisation, expression and DNA-binding characteristics.</title>
        <authorList>
            <person name="Teakle G.R."/>
            <person name="Manfield I.W."/>
            <person name="Graham J.F."/>
            <person name="Gilmartin P.M."/>
        </authorList>
    </citation>
    <scope>NUCLEOTIDE SEQUENCE [MRNA]</scope>
    <scope>FUNCTION</scope>
    <scope>TISSUE SPECIFICITY</scope>
    <source>
        <strain>cv. Columbia</strain>
    </source>
</reference>
<reference key="2">
    <citation type="journal article" date="2000" name="Nature">
        <title>Sequence and analysis of chromosome 3 of the plant Arabidopsis thaliana.</title>
        <authorList>
            <person name="Salanoubat M."/>
            <person name="Lemcke K."/>
            <person name="Rieger M."/>
            <person name="Ansorge W."/>
            <person name="Unseld M."/>
            <person name="Fartmann B."/>
            <person name="Valle G."/>
            <person name="Bloecker H."/>
            <person name="Perez-Alonso M."/>
            <person name="Obermaier B."/>
            <person name="Delseny M."/>
            <person name="Boutry M."/>
            <person name="Grivell L.A."/>
            <person name="Mache R."/>
            <person name="Puigdomenech P."/>
            <person name="De Simone V."/>
            <person name="Choisne N."/>
            <person name="Artiguenave F."/>
            <person name="Robert C."/>
            <person name="Brottier P."/>
            <person name="Wincker P."/>
            <person name="Cattolico L."/>
            <person name="Weissenbach J."/>
            <person name="Saurin W."/>
            <person name="Quetier F."/>
            <person name="Schaefer M."/>
            <person name="Mueller-Auer S."/>
            <person name="Gabel C."/>
            <person name="Fuchs M."/>
            <person name="Benes V."/>
            <person name="Wurmbach E."/>
            <person name="Drzonek H."/>
            <person name="Erfle H."/>
            <person name="Jordan N."/>
            <person name="Bangert S."/>
            <person name="Wiedelmann R."/>
            <person name="Kranz H."/>
            <person name="Voss H."/>
            <person name="Holland R."/>
            <person name="Brandt P."/>
            <person name="Nyakatura G."/>
            <person name="Vezzi A."/>
            <person name="D'Angelo M."/>
            <person name="Pallavicini A."/>
            <person name="Toppo S."/>
            <person name="Simionati B."/>
            <person name="Conrad A."/>
            <person name="Hornischer K."/>
            <person name="Kauer G."/>
            <person name="Loehnert T.-H."/>
            <person name="Nordsiek G."/>
            <person name="Reichelt J."/>
            <person name="Scharfe M."/>
            <person name="Schoen O."/>
            <person name="Bargues M."/>
            <person name="Terol J."/>
            <person name="Climent J."/>
            <person name="Navarro P."/>
            <person name="Collado C."/>
            <person name="Perez-Perez A."/>
            <person name="Ottenwaelder B."/>
            <person name="Duchemin D."/>
            <person name="Cooke R."/>
            <person name="Laudie M."/>
            <person name="Berger-Llauro C."/>
            <person name="Purnelle B."/>
            <person name="Masuy D."/>
            <person name="de Haan M."/>
            <person name="Maarse A.C."/>
            <person name="Alcaraz J.-P."/>
            <person name="Cottet A."/>
            <person name="Casacuberta E."/>
            <person name="Monfort A."/>
            <person name="Argiriou A."/>
            <person name="Flores M."/>
            <person name="Liguori R."/>
            <person name="Vitale D."/>
            <person name="Mannhaupt G."/>
            <person name="Haase D."/>
            <person name="Schoof H."/>
            <person name="Rudd S."/>
            <person name="Zaccaria P."/>
            <person name="Mewes H.-W."/>
            <person name="Mayer K.F.X."/>
            <person name="Kaul S."/>
            <person name="Town C.D."/>
            <person name="Koo H.L."/>
            <person name="Tallon L.J."/>
            <person name="Jenkins J."/>
            <person name="Rooney T."/>
            <person name="Rizzo M."/>
            <person name="Walts A."/>
            <person name="Utterback T."/>
            <person name="Fujii C.Y."/>
            <person name="Shea T.P."/>
            <person name="Creasy T.H."/>
            <person name="Haas B."/>
            <person name="Maiti R."/>
            <person name="Wu D."/>
            <person name="Peterson J."/>
            <person name="Van Aken S."/>
            <person name="Pai G."/>
            <person name="Militscher J."/>
            <person name="Sellers P."/>
            <person name="Gill J.E."/>
            <person name="Feldblyum T.V."/>
            <person name="Preuss D."/>
            <person name="Lin X."/>
            <person name="Nierman W.C."/>
            <person name="Salzberg S.L."/>
            <person name="White O."/>
            <person name="Venter J.C."/>
            <person name="Fraser C.M."/>
            <person name="Kaneko T."/>
            <person name="Nakamura Y."/>
            <person name="Sato S."/>
            <person name="Kato T."/>
            <person name="Asamizu E."/>
            <person name="Sasamoto S."/>
            <person name="Kimura T."/>
            <person name="Idesawa K."/>
            <person name="Kawashima K."/>
            <person name="Kishida Y."/>
            <person name="Kiyokawa C."/>
            <person name="Kohara M."/>
            <person name="Matsumoto M."/>
            <person name="Matsuno A."/>
            <person name="Muraki A."/>
            <person name="Nakayama S."/>
            <person name="Nakazaki N."/>
            <person name="Shinpo S."/>
            <person name="Takeuchi C."/>
            <person name="Wada T."/>
            <person name="Watanabe A."/>
            <person name="Yamada M."/>
            <person name="Yasuda M."/>
            <person name="Tabata S."/>
        </authorList>
    </citation>
    <scope>NUCLEOTIDE SEQUENCE [LARGE SCALE GENOMIC DNA]</scope>
    <source>
        <strain>cv. Columbia</strain>
    </source>
</reference>
<reference key="3">
    <citation type="journal article" date="2017" name="Plant J.">
        <title>Araport11: a complete reannotation of the Arabidopsis thaliana reference genome.</title>
        <authorList>
            <person name="Cheng C.Y."/>
            <person name="Krishnakumar V."/>
            <person name="Chan A.P."/>
            <person name="Thibaud-Nissen F."/>
            <person name="Schobel S."/>
            <person name="Town C.D."/>
        </authorList>
    </citation>
    <scope>GENOME REANNOTATION</scope>
    <source>
        <strain>cv. Columbia</strain>
    </source>
</reference>
<reference key="4">
    <citation type="journal article" date="2003" name="Science">
        <title>Empirical analysis of transcriptional activity in the Arabidopsis genome.</title>
        <authorList>
            <person name="Yamada K."/>
            <person name="Lim J."/>
            <person name="Dale J.M."/>
            <person name="Chen H."/>
            <person name="Shinn P."/>
            <person name="Palm C.J."/>
            <person name="Southwick A.M."/>
            <person name="Wu H.C."/>
            <person name="Kim C.J."/>
            <person name="Nguyen M."/>
            <person name="Pham P.K."/>
            <person name="Cheuk R.F."/>
            <person name="Karlin-Newmann G."/>
            <person name="Liu S.X."/>
            <person name="Lam B."/>
            <person name="Sakano H."/>
            <person name="Wu T."/>
            <person name="Yu G."/>
            <person name="Miranda M."/>
            <person name="Quach H.L."/>
            <person name="Tripp M."/>
            <person name="Chang C.H."/>
            <person name="Lee J.M."/>
            <person name="Toriumi M.J."/>
            <person name="Chan M.M."/>
            <person name="Tang C.C."/>
            <person name="Onodera C.S."/>
            <person name="Deng J.M."/>
            <person name="Akiyama K."/>
            <person name="Ansari Y."/>
            <person name="Arakawa T."/>
            <person name="Banh J."/>
            <person name="Banno F."/>
            <person name="Bowser L."/>
            <person name="Brooks S.Y."/>
            <person name="Carninci P."/>
            <person name="Chao Q."/>
            <person name="Choy N."/>
            <person name="Enju A."/>
            <person name="Goldsmith A.D."/>
            <person name="Gurjal M."/>
            <person name="Hansen N.F."/>
            <person name="Hayashizaki Y."/>
            <person name="Johnson-Hopson C."/>
            <person name="Hsuan V.W."/>
            <person name="Iida K."/>
            <person name="Karnes M."/>
            <person name="Khan S."/>
            <person name="Koesema E."/>
            <person name="Ishida J."/>
            <person name="Jiang P.X."/>
            <person name="Jones T."/>
            <person name="Kawai J."/>
            <person name="Kamiya A."/>
            <person name="Meyers C."/>
            <person name="Nakajima M."/>
            <person name="Narusaka M."/>
            <person name="Seki M."/>
            <person name="Sakurai T."/>
            <person name="Satou M."/>
            <person name="Tamse R."/>
            <person name="Vaysberg M."/>
            <person name="Wallender E.K."/>
            <person name="Wong C."/>
            <person name="Yamamura Y."/>
            <person name="Yuan S."/>
            <person name="Shinozaki K."/>
            <person name="Davis R.W."/>
            <person name="Theologis A."/>
            <person name="Ecker J.R."/>
        </authorList>
    </citation>
    <scope>NUCLEOTIDE SEQUENCE [LARGE SCALE MRNA]</scope>
    <source>
        <strain>cv. Columbia</strain>
    </source>
</reference>
<reference key="5">
    <citation type="journal article" date="2004" name="Plant Physiol.">
        <title>The GATA family of transcription factors in Arabidopsis and rice.</title>
        <authorList>
            <person name="Reyes J.C."/>
            <person name="Muro-Pastor M.I."/>
            <person name="Florencio F.J."/>
        </authorList>
    </citation>
    <scope>GENE FAMILY ORGANIZATION</scope>
</reference>
<evidence type="ECO:0000255" key="1"/>
<evidence type="ECO:0000255" key="2">
    <source>
        <dbReference type="PROSITE-ProRule" id="PRU00094"/>
    </source>
</evidence>
<evidence type="ECO:0000256" key="3">
    <source>
        <dbReference type="SAM" id="MobiDB-lite"/>
    </source>
</evidence>
<evidence type="ECO:0000269" key="4">
    <source>
    </source>
</evidence>
<evidence type="ECO:0000305" key="5"/>
<comment type="function">
    <text evidence="4">Transcriptional activator that specifically binds 5'-GATA-3' or 5'-GAT-3' motifs within gene promoters. May be involved in the regulation of some light-responsive genes.</text>
</comment>
<comment type="subcellular location">
    <subcellularLocation>
        <location evidence="5">Nucleus</location>
    </subcellularLocation>
</comment>
<comment type="tissue specificity">
    <text evidence="4">Expressed in roots, flowers and leaves, and to a lower extent in stems.</text>
</comment>
<comment type="similarity">
    <text evidence="5">Belongs to the type IV zinc-finger family. Class A subfamily.</text>
</comment>
<accession>O49743</accession>
<name>GATA4_ARATH</name>
<organism>
    <name type="scientific">Arabidopsis thaliana</name>
    <name type="common">Mouse-ear cress</name>
    <dbReference type="NCBI Taxonomy" id="3702"/>
    <lineage>
        <taxon>Eukaryota</taxon>
        <taxon>Viridiplantae</taxon>
        <taxon>Streptophyta</taxon>
        <taxon>Embryophyta</taxon>
        <taxon>Tracheophyta</taxon>
        <taxon>Spermatophyta</taxon>
        <taxon>Magnoliopsida</taxon>
        <taxon>eudicotyledons</taxon>
        <taxon>Gunneridae</taxon>
        <taxon>Pentapetalae</taxon>
        <taxon>rosids</taxon>
        <taxon>malvids</taxon>
        <taxon>Brassicales</taxon>
        <taxon>Brassicaceae</taxon>
        <taxon>Camelineae</taxon>
        <taxon>Arabidopsis</taxon>
    </lineage>
</organism>
<proteinExistence type="evidence at transcript level"/>
<dbReference type="EMBL" id="Y13651">
    <property type="protein sequence ID" value="CAA74002.1"/>
    <property type="molecule type" value="mRNA"/>
</dbReference>
<dbReference type="EMBL" id="AL138646">
    <property type="protein sequence ID" value="CAB81839.1"/>
    <property type="molecule type" value="Genomic_DNA"/>
</dbReference>
<dbReference type="EMBL" id="CP002686">
    <property type="protein sequence ID" value="AEE80075.1"/>
    <property type="molecule type" value="Genomic_DNA"/>
</dbReference>
<dbReference type="EMBL" id="AF378881">
    <property type="protein sequence ID" value="AAK55684.1"/>
    <property type="molecule type" value="mRNA"/>
</dbReference>
<dbReference type="EMBL" id="AY039532">
    <property type="protein sequence ID" value="AAK62588.1"/>
    <property type="molecule type" value="mRNA"/>
</dbReference>
<dbReference type="EMBL" id="AY050476">
    <property type="protein sequence ID" value="AAK91489.1"/>
    <property type="molecule type" value="mRNA"/>
</dbReference>
<dbReference type="PIR" id="T47864">
    <property type="entry name" value="T47864"/>
</dbReference>
<dbReference type="RefSeq" id="NP_191612.1">
    <property type="nucleotide sequence ID" value="NM_115917.5"/>
</dbReference>
<dbReference type="SMR" id="O49743"/>
<dbReference type="BioGRID" id="10538">
    <property type="interactions" value="19"/>
</dbReference>
<dbReference type="FunCoup" id="O49743">
    <property type="interactions" value="12"/>
</dbReference>
<dbReference type="IntAct" id="O49743">
    <property type="interactions" value="20"/>
</dbReference>
<dbReference type="STRING" id="3702.O49743"/>
<dbReference type="PaxDb" id="3702-AT3G60530.1"/>
<dbReference type="ProteomicsDB" id="230485"/>
<dbReference type="EnsemblPlants" id="AT3G60530.1">
    <property type="protein sequence ID" value="AT3G60530.1"/>
    <property type="gene ID" value="AT3G60530"/>
</dbReference>
<dbReference type="GeneID" id="825224"/>
<dbReference type="Gramene" id="AT3G60530.1">
    <property type="protein sequence ID" value="AT3G60530.1"/>
    <property type="gene ID" value="AT3G60530"/>
</dbReference>
<dbReference type="KEGG" id="ath:AT3G60530"/>
<dbReference type="Araport" id="AT3G60530"/>
<dbReference type="TAIR" id="AT3G60530">
    <property type="gene designation" value="GATA4"/>
</dbReference>
<dbReference type="eggNOG" id="KOG1601">
    <property type="taxonomic scope" value="Eukaryota"/>
</dbReference>
<dbReference type="HOGENOM" id="CLU_045755_1_1_1"/>
<dbReference type="InParanoid" id="O49743"/>
<dbReference type="OMA" id="GMYGHHY"/>
<dbReference type="OrthoDB" id="2162994at2759"/>
<dbReference type="PhylomeDB" id="O49743"/>
<dbReference type="PRO" id="PR:O49743"/>
<dbReference type="Proteomes" id="UP000006548">
    <property type="component" value="Chromosome 3"/>
</dbReference>
<dbReference type="ExpressionAtlas" id="O49743">
    <property type="expression patterns" value="baseline and differential"/>
</dbReference>
<dbReference type="GO" id="GO:0005634">
    <property type="term" value="C:nucleus"/>
    <property type="evidence" value="ECO:0007669"/>
    <property type="project" value="UniProtKB-SubCell"/>
</dbReference>
<dbReference type="GO" id="GO:0003700">
    <property type="term" value="F:DNA-binding transcription factor activity"/>
    <property type="evidence" value="ECO:0000250"/>
    <property type="project" value="TAIR"/>
</dbReference>
<dbReference type="GO" id="GO:0000976">
    <property type="term" value="F:transcription cis-regulatory region binding"/>
    <property type="evidence" value="ECO:0000353"/>
    <property type="project" value="TAIR"/>
</dbReference>
<dbReference type="GO" id="GO:0008270">
    <property type="term" value="F:zinc ion binding"/>
    <property type="evidence" value="ECO:0007669"/>
    <property type="project" value="UniProtKB-KW"/>
</dbReference>
<dbReference type="GO" id="GO:0045893">
    <property type="term" value="P:positive regulation of DNA-templated transcription"/>
    <property type="evidence" value="ECO:0007669"/>
    <property type="project" value="InterPro"/>
</dbReference>
<dbReference type="GO" id="GO:0009416">
    <property type="term" value="P:response to light stimulus"/>
    <property type="evidence" value="ECO:0000270"/>
    <property type="project" value="TAIR"/>
</dbReference>
<dbReference type="CDD" id="cd00202">
    <property type="entry name" value="ZnF_GATA"/>
    <property type="match status" value="1"/>
</dbReference>
<dbReference type="FunFam" id="3.30.50.10:FF:000018">
    <property type="entry name" value="GATA transcription factor"/>
    <property type="match status" value="1"/>
</dbReference>
<dbReference type="Gene3D" id="3.30.50.10">
    <property type="entry name" value="Erythroid Transcription Factor GATA-1, subunit A"/>
    <property type="match status" value="1"/>
</dbReference>
<dbReference type="InterPro" id="IPR051140">
    <property type="entry name" value="GATA_TF"/>
</dbReference>
<dbReference type="InterPro" id="IPR016679">
    <property type="entry name" value="TF_GATA_pln"/>
</dbReference>
<dbReference type="InterPro" id="IPR000679">
    <property type="entry name" value="Znf_GATA"/>
</dbReference>
<dbReference type="InterPro" id="IPR013088">
    <property type="entry name" value="Znf_NHR/GATA"/>
</dbReference>
<dbReference type="PANTHER" id="PTHR45658">
    <property type="entry name" value="GATA TRANSCRIPTION FACTOR"/>
    <property type="match status" value="1"/>
</dbReference>
<dbReference type="PANTHER" id="PTHR45658:SF46">
    <property type="entry name" value="GATA TRANSCRIPTION FACTOR 4"/>
    <property type="match status" value="1"/>
</dbReference>
<dbReference type="Pfam" id="PF00320">
    <property type="entry name" value="GATA"/>
    <property type="match status" value="1"/>
</dbReference>
<dbReference type="PIRSF" id="PIRSF016992">
    <property type="entry name" value="TF_GATA_plant"/>
    <property type="match status" value="1"/>
</dbReference>
<dbReference type="SMART" id="SM00401">
    <property type="entry name" value="ZnF_GATA"/>
    <property type="match status" value="1"/>
</dbReference>
<dbReference type="SUPFAM" id="SSF57716">
    <property type="entry name" value="Glucocorticoid receptor-like (DNA-binding domain)"/>
    <property type="match status" value="1"/>
</dbReference>
<dbReference type="PROSITE" id="PS00344">
    <property type="entry name" value="GATA_ZN_FINGER_1"/>
    <property type="match status" value="1"/>
</dbReference>
<dbReference type="PROSITE" id="PS50114">
    <property type="entry name" value="GATA_ZN_FINGER_2"/>
    <property type="match status" value="1"/>
</dbReference>
<gene>
    <name type="primary">GATA4</name>
    <name type="ordered locus">At3g60530</name>
    <name type="ORF">T8B10.190</name>
</gene>
<feature type="chain" id="PRO_0000083433" description="GATA transcription factor 4">
    <location>
        <begin position="1"/>
        <end position="240"/>
    </location>
</feature>
<feature type="zinc finger region" description="GATA-type" evidence="2">
    <location>
        <begin position="154"/>
        <end position="208"/>
    </location>
</feature>
<feature type="region of interest" description="Disordered" evidence="3">
    <location>
        <begin position="104"/>
        <end position="124"/>
    </location>
</feature>
<feature type="short sequence motif" description="Nuclear localization signal" evidence="1">
    <location>
        <begin position="109"/>
        <end position="116"/>
    </location>
</feature>
<protein>
    <recommendedName>
        <fullName>GATA transcription factor 4</fullName>
        <shortName>AtGATA-4</shortName>
    </recommendedName>
</protein>
<keyword id="KW-0010">Activator</keyword>
<keyword id="KW-0238">DNA-binding</keyword>
<keyword id="KW-0479">Metal-binding</keyword>
<keyword id="KW-0539">Nucleus</keyword>
<keyword id="KW-1185">Reference proteome</keyword>
<keyword id="KW-0804">Transcription</keyword>
<keyword id="KW-0805">Transcription regulation</keyword>
<keyword id="KW-0862">Zinc</keyword>
<keyword id="KW-0863">Zinc-finger</keyword>
<sequence>MDVYGMSSPDLLRIDDLLDFSNDEIFSSSSTVTSSAASSAASSENPFSFPSSTYTSPTLLTDFTHDLCVPSDDAAHLEWLSRFVDDSFSDFPANPLTMTVRPEISFTGKPRSRRSRAPAPSVAGTWAPMSESELCHSVAKPKPKKVYNAESVTADGARRCTHCASEKTPQWRTGPLGPKTLCNACGVRYKSGRLVPEYRPASSPTFVLTQHSNSHRKVMELRRQKEQQESCVRIPPFQPQ</sequence>